<gene>
    <name evidence="1" type="primary">cdd</name>
    <name type="ordered locus">EcolC_1505</name>
</gene>
<organism>
    <name type="scientific">Escherichia coli (strain ATCC 8739 / DSM 1576 / NBRC 3972 / NCIMB 8545 / WDCM 00012 / Crooks)</name>
    <dbReference type="NCBI Taxonomy" id="481805"/>
    <lineage>
        <taxon>Bacteria</taxon>
        <taxon>Pseudomonadati</taxon>
        <taxon>Pseudomonadota</taxon>
        <taxon>Gammaproteobacteria</taxon>
        <taxon>Enterobacterales</taxon>
        <taxon>Enterobacteriaceae</taxon>
        <taxon>Escherichia</taxon>
    </lineage>
</organism>
<name>CDD_ECOLC</name>
<dbReference type="EC" id="3.5.4.5" evidence="1"/>
<dbReference type="EMBL" id="CP000946">
    <property type="protein sequence ID" value="ACA77167.1"/>
    <property type="molecule type" value="Genomic_DNA"/>
</dbReference>
<dbReference type="RefSeq" id="WP_000553569.1">
    <property type="nucleotide sequence ID" value="NC_010468.1"/>
</dbReference>
<dbReference type="SMR" id="B1IYC6"/>
<dbReference type="KEGG" id="ecl:EcolC_1505"/>
<dbReference type="HOGENOM" id="CLU_052424_0_0_6"/>
<dbReference type="GO" id="GO:0005829">
    <property type="term" value="C:cytosol"/>
    <property type="evidence" value="ECO:0007669"/>
    <property type="project" value="TreeGrafter"/>
</dbReference>
<dbReference type="GO" id="GO:0004126">
    <property type="term" value="F:cytidine deaminase activity"/>
    <property type="evidence" value="ECO:0007669"/>
    <property type="project" value="UniProtKB-UniRule"/>
</dbReference>
<dbReference type="GO" id="GO:0042802">
    <property type="term" value="F:identical protein binding"/>
    <property type="evidence" value="ECO:0007669"/>
    <property type="project" value="UniProtKB-ARBA"/>
</dbReference>
<dbReference type="GO" id="GO:0008270">
    <property type="term" value="F:zinc ion binding"/>
    <property type="evidence" value="ECO:0007669"/>
    <property type="project" value="UniProtKB-UniRule"/>
</dbReference>
<dbReference type="GO" id="GO:0009972">
    <property type="term" value="P:cytidine deamination"/>
    <property type="evidence" value="ECO:0007669"/>
    <property type="project" value="InterPro"/>
</dbReference>
<dbReference type="CDD" id="cd01283">
    <property type="entry name" value="cytidine_deaminase"/>
    <property type="match status" value="2"/>
</dbReference>
<dbReference type="FunFam" id="3.40.140.10:FF:000006">
    <property type="entry name" value="Cytidine deaminase"/>
    <property type="match status" value="1"/>
</dbReference>
<dbReference type="FunFam" id="3.40.140.10:FF:000007">
    <property type="entry name" value="Cytidine deaminase"/>
    <property type="match status" value="1"/>
</dbReference>
<dbReference type="Gene3D" id="3.40.140.10">
    <property type="entry name" value="Cytidine Deaminase, domain 2"/>
    <property type="match status" value="2"/>
</dbReference>
<dbReference type="HAMAP" id="MF_01558">
    <property type="entry name" value="Cyt_deam"/>
    <property type="match status" value="1"/>
</dbReference>
<dbReference type="InterPro" id="IPR016192">
    <property type="entry name" value="APOBEC/CMP_deaminase_Zn-bd"/>
</dbReference>
<dbReference type="InterPro" id="IPR002125">
    <property type="entry name" value="CMP_dCMP_dom"/>
</dbReference>
<dbReference type="InterPro" id="IPR013171">
    <property type="entry name" value="Cyd/dCyd_deaminase_Zn-bd"/>
</dbReference>
<dbReference type="InterPro" id="IPR050202">
    <property type="entry name" value="Cyt/Deoxycyt_deaminase"/>
</dbReference>
<dbReference type="InterPro" id="IPR006263">
    <property type="entry name" value="Cyt_deam_dimer"/>
</dbReference>
<dbReference type="InterPro" id="IPR016193">
    <property type="entry name" value="Cytidine_deaminase-like"/>
</dbReference>
<dbReference type="InterPro" id="IPR020797">
    <property type="entry name" value="Cytidine_deaminase_bacteria"/>
</dbReference>
<dbReference type="NCBIfam" id="TIGR01355">
    <property type="entry name" value="cyt_deam_dimer"/>
    <property type="match status" value="1"/>
</dbReference>
<dbReference type="NCBIfam" id="NF006537">
    <property type="entry name" value="PRK09027.1"/>
    <property type="match status" value="1"/>
</dbReference>
<dbReference type="PANTHER" id="PTHR11644">
    <property type="entry name" value="CYTIDINE DEAMINASE"/>
    <property type="match status" value="1"/>
</dbReference>
<dbReference type="PANTHER" id="PTHR11644:SF2">
    <property type="entry name" value="CYTIDINE DEAMINASE"/>
    <property type="match status" value="1"/>
</dbReference>
<dbReference type="Pfam" id="PF00383">
    <property type="entry name" value="dCMP_cyt_deam_1"/>
    <property type="match status" value="1"/>
</dbReference>
<dbReference type="Pfam" id="PF08211">
    <property type="entry name" value="dCMP_cyt_deam_2"/>
    <property type="match status" value="1"/>
</dbReference>
<dbReference type="PIRSF" id="PIRSF006334">
    <property type="entry name" value="Cdd_plus_pseudo"/>
    <property type="match status" value="1"/>
</dbReference>
<dbReference type="SUPFAM" id="SSF53927">
    <property type="entry name" value="Cytidine deaminase-like"/>
    <property type="match status" value="2"/>
</dbReference>
<dbReference type="PROSITE" id="PS00903">
    <property type="entry name" value="CYT_DCMP_DEAMINASES_1"/>
    <property type="match status" value="1"/>
</dbReference>
<dbReference type="PROSITE" id="PS51747">
    <property type="entry name" value="CYT_DCMP_DEAMINASES_2"/>
    <property type="match status" value="2"/>
</dbReference>
<reference key="1">
    <citation type="submission" date="2008-02" db="EMBL/GenBank/DDBJ databases">
        <title>Complete sequence of Escherichia coli C str. ATCC 8739.</title>
        <authorList>
            <person name="Copeland A."/>
            <person name="Lucas S."/>
            <person name="Lapidus A."/>
            <person name="Glavina del Rio T."/>
            <person name="Dalin E."/>
            <person name="Tice H."/>
            <person name="Bruce D."/>
            <person name="Goodwin L."/>
            <person name="Pitluck S."/>
            <person name="Kiss H."/>
            <person name="Brettin T."/>
            <person name="Detter J.C."/>
            <person name="Han C."/>
            <person name="Kuske C.R."/>
            <person name="Schmutz J."/>
            <person name="Larimer F."/>
            <person name="Land M."/>
            <person name="Hauser L."/>
            <person name="Kyrpides N."/>
            <person name="Mikhailova N."/>
            <person name="Ingram L."/>
            <person name="Richardson P."/>
        </authorList>
    </citation>
    <scope>NUCLEOTIDE SEQUENCE [LARGE SCALE GENOMIC DNA]</scope>
    <source>
        <strain>ATCC 8739 / DSM 1576 / NBRC 3972 / NCIMB 8545 / WDCM 00012 / Crooks</strain>
    </source>
</reference>
<accession>B1IYC6</accession>
<proteinExistence type="inferred from homology"/>
<protein>
    <recommendedName>
        <fullName evidence="1">Cytidine deaminase</fullName>
        <ecNumber evidence="1">3.5.4.5</ecNumber>
    </recommendedName>
    <alternativeName>
        <fullName evidence="1">Cytidine aminohydrolase</fullName>
        <shortName evidence="1">CDA</shortName>
    </alternativeName>
</protein>
<feature type="chain" id="PRO_1000087793" description="Cytidine deaminase">
    <location>
        <begin position="1"/>
        <end position="294"/>
    </location>
</feature>
<feature type="domain" description="CMP/dCMP-type deaminase 1" evidence="2">
    <location>
        <begin position="48"/>
        <end position="168"/>
    </location>
</feature>
<feature type="domain" description="CMP/dCMP-type deaminase 2" evidence="2">
    <location>
        <begin position="186"/>
        <end position="294"/>
    </location>
</feature>
<feature type="active site" description="Proton donor" evidence="1">
    <location>
        <position position="104"/>
    </location>
</feature>
<feature type="binding site" evidence="1">
    <location>
        <begin position="89"/>
        <end position="91"/>
    </location>
    <ligand>
        <name>substrate</name>
    </ligand>
</feature>
<feature type="binding site" evidence="1">
    <location>
        <position position="102"/>
    </location>
    <ligand>
        <name>Zn(2+)</name>
        <dbReference type="ChEBI" id="CHEBI:29105"/>
        <note>catalytic</note>
    </ligand>
</feature>
<feature type="binding site" evidence="1">
    <location>
        <position position="129"/>
    </location>
    <ligand>
        <name>Zn(2+)</name>
        <dbReference type="ChEBI" id="CHEBI:29105"/>
        <note>catalytic</note>
    </ligand>
</feature>
<feature type="binding site" evidence="1">
    <location>
        <position position="132"/>
    </location>
    <ligand>
        <name>Zn(2+)</name>
        <dbReference type="ChEBI" id="CHEBI:29105"/>
        <note>catalytic</note>
    </ligand>
</feature>
<sequence length="294" mass="31570">MHPRFQTAFAQLADNLQSALEPILADKYFPALLTGEQVSSLKSATGLDEDALAFALLPLAAACARTPLSNFNVGAIARGVSGTWYFGANMEFIGATMQQTVHAEQSAISHAWLSGEKALAAITVNYTPCGHCRQFMNELNSSLDLRIHLPGREAHALRDYLPDAFGPKDLEIKTLLMDEQDHGYALTGDALSQAAIAAANRSHMPYSKSPSGVALECKDGRIFSGSYAENAAFNPTLPPLQGALILLNLKGYDYPDIQRAVLAEKADAPLIQWDATSATLKALGCHSIDRVLLA</sequence>
<evidence type="ECO:0000255" key="1">
    <source>
        <dbReference type="HAMAP-Rule" id="MF_01558"/>
    </source>
</evidence>
<evidence type="ECO:0000255" key="2">
    <source>
        <dbReference type="PROSITE-ProRule" id="PRU01083"/>
    </source>
</evidence>
<comment type="function">
    <text evidence="1">This enzyme scavenges exogenous and endogenous cytidine and 2'-deoxycytidine for UMP synthesis.</text>
</comment>
<comment type="catalytic activity">
    <reaction evidence="1">
        <text>cytidine + H2O + H(+) = uridine + NH4(+)</text>
        <dbReference type="Rhea" id="RHEA:16069"/>
        <dbReference type="ChEBI" id="CHEBI:15377"/>
        <dbReference type="ChEBI" id="CHEBI:15378"/>
        <dbReference type="ChEBI" id="CHEBI:16704"/>
        <dbReference type="ChEBI" id="CHEBI:17562"/>
        <dbReference type="ChEBI" id="CHEBI:28938"/>
        <dbReference type="EC" id="3.5.4.5"/>
    </reaction>
</comment>
<comment type="catalytic activity">
    <reaction evidence="1">
        <text>2'-deoxycytidine + H2O + H(+) = 2'-deoxyuridine + NH4(+)</text>
        <dbReference type="Rhea" id="RHEA:13433"/>
        <dbReference type="ChEBI" id="CHEBI:15377"/>
        <dbReference type="ChEBI" id="CHEBI:15378"/>
        <dbReference type="ChEBI" id="CHEBI:15698"/>
        <dbReference type="ChEBI" id="CHEBI:16450"/>
        <dbReference type="ChEBI" id="CHEBI:28938"/>
        <dbReference type="EC" id="3.5.4.5"/>
    </reaction>
</comment>
<comment type="cofactor">
    <cofactor evidence="1">
        <name>Zn(2+)</name>
        <dbReference type="ChEBI" id="CHEBI:29105"/>
    </cofactor>
    <text evidence="1">Binds 1 zinc ion.</text>
</comment>
<comment type="subunit">
    <text evidence="1">Homodimer.</text>
</comment>
<comment type="similarity">
    <text evidence="1">Belongs to the cytidine and deoxycytidylate deaminase family.</text>
</comment>
<keyword id="KW-0378">Hydrolase</keyword>
<keyword id="KW-0479">Metal-binding</keyword>
<keyword id="KW-0862">Zinc</keyword>